<organism>
    <name type="scientific">Carcharhinus perezii</name>
    <name type="common">Reef shark</name>
    <name type="synonym">Carcharhinus springeri</name>
    <dbReference type="NCBI Taxonomy" id="303935"/>
    <lineage>
        <taxon>Eukaryota</taxon>
        <taxon>Metazoa</taxon>
        <taxon>Chordata</taxon>
        <taxon>Craniata</taxon>
        <taxon>Vertebrata</taxon>
        <taxon>Chondrichthyes</taxon>
        <taxon>Elasmobranchii</taxon>
        <taxon>Galeomorphii</taxon>
        <taxon>Galeoidea</taxon>
        <taxon>Carcharhiniformes</taxon>
        <taxon>Carcharhinidae</taxon>
        <taxon>Carcharhinus</taxon>
    </lineage>
</organism>
<evidence type="ECO:0000255" key="1">
    <source>
        <dbReference type="PROSITE-ProRule" id="PRU00040"/>
    </source>
</evidence>
<protein>
    <recommendedName>
        <fullName>Tetranectin-like protein</fullName>
    </recommendedName>
</protein>
<proteinExistence type="evidence at protein level"/>
<name>TETN_CARPZ</name>
<accession>P26258</accession>
<feature type="chain" id="PRO_0000046690" description="Tetranectin-like protein">
    <location>
        <begin position="1"/>
        <end position="166"/>
    </location>
</feature>
<feature type="domain" description="C-type lectin" evidence="1">
    <location>
        <begin position="43"/>
        <end position="161"/>
    </location>
</feature>
<feature type="disulfide bond">
    <location>
        <begin position="37"/>
        <end position="47"/>
    </location>
</feature>
<feature type="disulfide bond">
    <location>
        <begin position="64"/>
        <end position="160"/>
    </location>
</feature>
<feature type="disulfide bond">
    <location>
        <begin position="136"/>
        <end position="152"/>
    </location>
</feature>
<sequence>SKPSKSGKGKDDLRNEIDKLWREVNSLKEMQALQTVCLKGTKIHKKCYLASRGSKSYHAANEDCIAQGGTLSIPRSSDEGNSLRSYAKKSLVGARDFWIGVNDMTTEGKFVDVNGLPITYFNWDRSKPVGGTRENCVAASTSGQGKWSDDVCRSEKRYICEYLIPV</sequence>
<keyword id="KW-0903">Direct protein sequencing</keyword>
<keyword id="KW-1015">Disulfide bond</keyword>
<keyword id="KW-0430">Lectin</keyword>
<dbReference type="PIR" id="A37289">
    <property type="entry name" value="A37289"/>
</dbReference>
<dbReference type="SMR" id="P26258"/>
<dbReference type="GO" id="GO:0005615">
    <property type="term" value="C:extracellular space"/>
    <property type="evidence" value="ECO:0007669"/>
    <property type="project" value="TreeGrafter"/>
</dbReference>
<dbReference type="GO" id="GO:0030246">
    <property type="term" value="F:carbohydrate binding"/>
    <property type="evidence" value="ECO:0007669"/>
    <property type="project" value="UniProtKB-KW"/>
</dbReference>
<dbReference type="GO" id="GO:0001503">
    <property type="term" value="P:ossification"/>
    <property type="evidence" value="ECO:0007669"/>
    <property type="project" value="TreeGrafter"/>
</dbReference>
<dbReference type="CDD" id="cd03596">
    <property type="entry name" value="CLECT_tetranectin_like"/>
    <property type="match status" value="1"/>
</dbReference>
<dbReference type="FunFam" id="3.10.100.10:FF:000010">
    <property type="entry name" value="C-type lectin domain family 3 member A"/>
    <property type="match status" value="1"/>
</dbReference>
<dbReference type="Gene3D" id="3.10.100.10">
    <property type="entry name" value="Mannose-Binding Protein A, subunit A"/>
    <property type="match status" value="1"/>
</dbReference>
<dbReference type="InterPro" id="IPR001304">
    <property type="entry name" value="C-type_lectin-like"/>
</dbReference>
<dbReference type="InterPro" id="IPR016186">
    <property type="entry name" value="C-type_lectin-like/link_sf"/>
</dbReference>
<dbReference type="InterPro" id="IPR018378">
    <property type="entry name" value="C-type_lectin_CS"/>
</dbReference>
<dbReference type="InterPro" id="IPR051663">
    <property type="entry name" value="CLec_Tetranectin-domain"/>
</dbReference>
<dbReference type="InterPro" id="IPR016187">
    <property type="entry name" value="CTDL_fold"/>
</dbReference>
<dbReference type="PANTHER" id="PTHR22799:SF2">
    <property type="entry name" value="C-TYPE LECTIN DOMAIN FAMILY 3 MEMBER A"/>
    <property type="match status" value="1"/>
</dbReference>
<dbReference type="PANTHER" id="PTHR22799">
    <property type="entry name" value="TETRANECTIN-RELATED"/>
    <property type="match status" value="1"/>
</dbReference>
<dbReference type="Pfam" id="PF00059">
    <property type="entry name" value="Lectin_C"/>
    <property type="match status" value="1"/>
</dbReference>
<dbReference type="SMART" id="SM00034">
    <property type="entry name" value="CLECT"/>
    <property type="match status" value="1"/>
</dbReference>
<dbReference type="SUPFAM" id="SSF56436">
    <property type="entry name" value="C-type lectin-like"/>
    <property type="match status" value="1"/>
</dbReference>
<dbReference type="SUPFAM" id="SSF57944">
    <property type="entry name" value="Triple coiled coil domain of C-type lectins"/>
    <property type="match status" value="1"/>
</dbReference>
<dbReference type="PROSITE" id="PS00615">
    <property type="entry name" value="C_TYPE_LECTIN_1"/>
    <property type="match status" value="1"/>
</dbReference>
<dbReference type="PROSITE" id="PS50041">
    <property type="entry name" value="C_TYPE_LECTIN_2"/>
    <property type="match status" value="1"/>
</dbReference>
<reference key="1">
    <citation type="journal article" date="1992" name="Protein Sci.">
        <title>Primary structure of a protein isolated from reef shark (Carcharhinus springeri) cartilage that is similar to the mammalian C-type lectin homolog, tetranectin.</title>
        <authorList>
            <person name="Neame P.J."/>
            <person name="Young C.N."/>
            <person name="Treep J.T."/>
        </authorList>
    </citation>
    <scope>PROTEIN SEQUENCE</scope>
    <source>
        <tissue>Neural arch cartilage</tissue>
    </source>
</reference>